<comment type="function">
    <text evidence="1">This protein is located at the 30S-50S ribosomal subunit interface and may play a role in the structure and function of the aminoacyl-tRNA binding site.</text>
</comment>
<comment type="similarity">
    <text evidence="1">Belongs to the bacterial ribosomal protein bL19 family.</text>
</comment>
<dbReference type="EMBL" id="AE017332">
    <property type="protein sequence ID" value="AAV27411.1"/>
    <property type="molecule type" value="Genomic_DNA"/>
</dbReference>
<dbReference type="RefSeq" id="WP_011205934.1">
    <property type="nucleotide sequence ID" value="NC_006360.1"/>
</dbReference>
<dbReference type="SMR" id="Q601V5"/>
<dbReference type="KEGG" id="mhy:mhp096"/>
<dbReference type="eggNOG" id="COG0335">
    <property type="taxonomic scope" value="Bacteria"/>
</dbReference>
<dbReference type="HOGENOM" id="CLU_103507_2_2_14"/>
<dbReference type="PhylomeDB" id="Q601V5"/>
<dbReference type="Proteomes" id="UP000006822">
    <property type="component" value="Chromosome"/>
</dbReference>
<dbReference type="GO" id="GO:0022625">
    <property type="term" value="C:cytosolic large ribosomal subunit"/>
    <property type="evidence" value="ECO:0007669"/>
    <property type="project" value="TreeGrafter"/>
</dbReference>
<dbReference type="GO" id="GO:0003735">
    <property type="term" value="F:structural constituent of ribosome"/>
    <property type="evidence" value="ECO:0007669"/>
    <property type="project" value="InterPro"/>
</dbReference>
<dbReference type="GO" id="GO:0006412">
    <property type="term" value="P:translation"/>
    <property type="evidence" value="ECO:0007669"/>
    <property type="project" value="UniProtKB-UniRule"/>
</dbReference>
<dbReference type="Gene3D" id="2.30.30.790">
    <property type="match status" value="1"/>
</dbReference>
<dbReference type="HAMAP" id="MF_00402">
    <property type="entry name" value="Ribosomal_bL19"/>
    <property type="match status" value="1"/>
</dbReference>
<dbReference type="InterPro" id="IPR001857">
    <property type="entry name" value="Ribosomal_bL19"/>
</dbReference>
<dbReference type="InterPro" id="IPR018257">
    <property type="entry name" value="Ribosomal_bL19_CS"/>
</dbReference>
<dbReference type="InterPro" id="IPR038657">
    <property type="entry name" value="Ribosomal_bL19_sf"/>
</dbReference>
<dbReference type="InterPro" id="IPR008991">
    <property type="entry name" value="Translation_prot_SH3-like_sf"/>
</dbReference>
<dbReference type="NCBIfam" id="TIGR01024">
    <property type="entry name" value="rplS_bact"/>
    <property type="match status" value="1"/>
</dbReference>
<dbReference type="PANTHER" id="PTHR15680:SF9">
    <property type="entry name" value="LARGE RIBOSOMAL SUBUNIT PROTEIN BL19M"/>
    <property type="match status" value="1"/>
</dbReference>
<dbReference type="PANTHER" id="PTHR15680">
    <property type="entry name" value="RIBOSOMAL PROTEIN L19"/>
    <property type="match status" value="1"/>
</dbReference>
<dbReference type="Pfam" id="PF01245">
    <property type="entry name" value="Ribosomal_L19"/>
    <property type="match status" value="1"/>
</dbReference>
<dbReference type="PIRSF" id="PIRSF002191">
    <property type="entry name" value="Ribosomal_L19"/>
    <property type="match status" value="1"/>
</dbReference>
<dbReference type="PRINTS" id="PR00061">
    <property type="entry name" value="RIBOSOMALL19"/>
</dbReference>
<dbReference type="SUPFAM" id="SSF50104">
    <property type="entry name" value="Translation proteins SH3-like domain"/>
    <property type="match status" value="1"/>
</dbReference>
<dbReference type="PROSITE" id="PS01015">
    <property type="entry name" value="RIBOSOMAL_L19"/>
    <property type="match status" value="1"/>
</dbReference>
<name>RL19_MESH2</name>
<sequence>MQAKLIEILESSQIRLYPQFQPGDNVRVYFKIQEGNKTRIQIFEGLVIKFKKNGLSSNFVVRKISHNVGVERTFLLHSPLVEKVEVIRSNKVRRAKLYYMKKRSGKSARLKEIKRKELKNL</sequence>
<evidence type="ECO:0000255" key="1">
    <source>
        <dbReference type="HAMAP-Rule" id="MF_00402"/>
    </source>
</evidence>
<evidence type="ECO:0000305" key="2"/>
<proteinExistence type="inferred from homology"/>
<organism>
    <name type="scientific">Mesomycoplasma hyopneumoniae (strain 232)</name>
    <name type="common">Mycoplasma hyopneumoniae</name>
    <dbReference type="NCBI Taxonomy" id="295358"/>
    <lineage>
        <taxon>Bacteria</taxon>
        <taxon>Bacillati</taxon>
        <taxon>Mycoplasmatota</taxon>
        <taxon>Mycoplasmoidales</taxon>
        <taxon>Metamycoplasmataceae</taxon>
        <taxon>Mesomycoplasma</taxon>
    </lineage>
</organism>
<accession>Q601V5</accession>
<gene>
    <name evidence="1" type="primary">rplS</name>
    <name type="ordered locus">mhp096</name>
</gene>
<protein>
    <recommendedName>
        <fullName evidence="1">Large ribosomal subunit protein bL19</fullName>
    </recommendedName>
    <alternativeName>
        <fullName evidence="2">50S ribosomal protein L19</fullName>
    </alternativeName>
</protein>
<keyword id="KW-0687">Ribonucleoprotein</keyword>
<keyword id="KW-0689">Ribosomal protein</keyword>
<reference key="1">
    <citation type="journal article" date="2004" name="J. Bacteriol.">
        <title>The genome sequence of Mycoplasma hyopneumoniae strain 232, the agent of swine mycoplasmosis.</title>
        <authorList>
            <person name="Minion F.C."/>
            <person name="Lefkowitz E.J."/>
            <person name="Madsen M.L."/>
            <person name="Cleary B.J."/>
            <person name="Swartzell S.M."/>
            <person name="Mahairas G.G."/>
        </authorList>
    </citation>
    <scope>NUCLEOTIDE SEQUENCE [LARGE SCALE GENOMIC DNA]</scope>
    <source>
        <strain>232</strain>
    </source>
</reference>
<feature type="chain" id="PRO_0000163486" description="Large ribosomal subunit protein bL19">
    <location>
        <begin position="1"/>
        <end position="121"/>
    </location>
</feature>